<sequence>MNYRGIYRRRYVFVLLLLVAVVNISYGWTVLKNKDYKRRYLSPSGVEKVRKHLSRKYVASRNNTQTFKKHYFSNTWAVHIDPPDNDVADRIAKKHGFTNIGKIGNIEGHYHFKHEEIGERELEKARHKTALLNLEDEVKFAEQQKILERVKRDGIPNDPYFKDMWYLLNTGQASGPAGVDMNVVPVWKKNITGRGIVISVLDDGLDWTHPDLEANYDQTASIVLNDNDNDPMPRDSDADNCHGTRCAGEAAAIANNGICGTGVAYNAKIGGVRMLDGQATDALEASALGFRGDHIDIYINCWGPKDDGKTFGKPGPMAAKALRLGAEQGRNRLGSIFVWATGNGGLTDDDCNCDGYTTSIFTISIGCIGDHGLSAYYTEKCSSTLAVTFNGASHKEGRENKMVTTDLYHQCTEEFKGTSASAPLAAGIIALTLEANPLLTWRDVQALIVHTAQITSPVDEGWKRNGAGFHFNHKFGFGRLDANAMVNAAQSWKNLPAQRKCTAASGFDHQDIPRGDSLFINIPTVACESSSAQIAKVEHVVLTVSFVHRRRGDVSIDLISPKDTKSQMLSPRKYDDSDEGLDEWSFMTVYNWGENPKGIWRLKITDNPNQDDVMNLFNGDNTDDVESLEERVIDTQTKQNKAEWEKMRKENPYFDVPYPTGVRKDKVLGSTEINDNSFDTPHTETFKIIRNHIPEVNLQNNDNMNTLNFDPVTGRKKNSINKKIINSRKRNFLTFRNFLKKSKKVQVQQEETGTQRVQVNAGYENPRISCESGYTTCSGVLINYKLTFYGTGE</sequence>
<name>NECA_HYDVU</name>
<accession>P29146</accession>
<keyword id="KW-0025">Alternative splicing</keyword>
<keyword id="KW-0165">Cleavage on pair of basic residues</keyword>
<keyword id="KW-1015">Disulfide bond</keyword>
<keyword id="KW-0325">Glycoprotein</keyword>
<keyword id="KW-0378">Hydrolase</keyword>
<keyword id="KW-0645">Protease</keyword>
<keyword id="KW-1185">Reference proteome</keyword>
<keyword id="KW-0720">Serine protease</keyword>
<keyword id="KW-0732">Signal</keyword>
<keyword id="KW-0865">Zymogen</keyword>
<comment type="function">
    <text>Probably involved in the processing of hormone and other protein precursors at sites comprised of pairs of basic amino acid residues.</text>
</comment>
<comment type="alternative products">
    <event type="alternative splicing"/>
    <isoform>
        <id>P29146-1</id>
        <name>Variant A</name>
        <sequence type="displayed"/>
    </isoform>
    <isoform>
        <id>P29145-1</id>
        <name>Variant B</name>
        <sequence type="external"/>
    </isoform>
</comment>
<comment type="tissue specificity">
    <text>Predominantly in the body column.</text>
</comment>
<comment type="similarity">
    <text evidence="5">Belongs to the peptidase S8 family. Furin subfamily.</text>
</comment>
<proteinExistence type="evidence at transcript level"/>
<protein>
    <recommendedName>
        <fullName>PC3-like endoprotease variant A</fullName>
        <ecNumber>3.4.21.-</ecNumber>
    </recommendedName>
    <alternativeName>
        <fullName>SPC3</fullName>
    </alternativeName>
</protein>
<dbReference type="EC" id="3.4.21.-"/>
<dbReference type="EMBL" id="M95931">
    <property type="protein sequence ID" value="AAA29214.1"/>
    <property type="molecule type" value="mRNA"/>
</dbReference>
<dbReference type="PIR" id="A46184">
    <property type="entry name" value="A46184"/>
</dbReference>
<dbReference type="SMR" id="P29146"/>
<dbReference type="OrthoDB" id="300641at2759"/>
<dbReference type="Proteomes" id="UP000694840">
    <property type="component" value="Unplaced"/>
</dbReference>
<dbReference type="GO" id="GO:0000139">
    <property type="term" value="C:Golgi membrane"/>
    <property type="evidence" value="ECO:0007669"/>
    <property type="project" value="TreeGrafter"/>
</dbReference>
<dbReference type="GO" id="GO:0005802">
    <property type="term" value="C:trans-Golgi network"/>
    <property type="evidence" value="ECO:0007669"/>
    <property type="project" value="TreeGrafter"/>
</dbReference>
<dbReference type="GO" id="GO:0004252">
    <property type="term" value="F:serine-type endopeptidase activity"/>
    <property type="evidence" value="ECO:0007669"/>
    <property type="project" value="InterPro"/>
</dbReference>
<dbReference type="GO" id="GO:0016485">
    <property type="term" value="P:protein processing"/>
    <property type="evidence" value="ECO:0007669"/>
    <property type="project" value="TreeGrafter"/>
</dbReference>
<dbReference type="CDD" id="cd04059">
    <property type="entry name" value="Peptidases_S8_Protein_convertases_Kexins_Furin-like"/>
    <property type="match status" value="1"/>
</dbReference>
<dbReference type="FunFam" id="2.60.120.260:FF:000006">
    <property type="entry name" value="Proprotein convertase subtilisin/kexin type 5"/>
    <property type="match status" value="1"/>
</dbReference>
<dbReference type="FunFam" id="3.30.70.850:FF:000001">
    <property type="entry name" value="Proprotein convertase subtilisin/kexin type 5"/>
    <property type="match status" value="1"/>
</dbReference>
<dbReference type="FunFam" id="3.40.50.200:FF:000021">
    <property type="entry name" value="Proprotein convertase subtilisin/kexin type 5a"/>
    <property type="match status" value="1"/>
</dbReference>
<dbReference type="Gene3D" id="2.60.120.260">
    <property type="entry name" value="Galactose-binding domain-like"/>
    <property type="match status" value="1"/>
</dbReference>
<dbReference type="Gene3D" id="3.30.70.850">
    <property type="entry name" value="Peptidase S8, pro-domain"/>
    <property type="match status" value="1"/>
</dbReference>
<dbReference type="Gene3D" id="3.40.50.200">
    <property type="entry name" value="Peptidase S8/S53 domain"/>
    <property type="match status" value="1"/>
</dbReference>
<dbReference type="InterPro" id="IPR008979">
    <property type="entry name" value="Galactose-bd-like_sf"/>
</dbReference>
<dbReference type="InterPro" id="IPR034182">
    <property type="entry name" value="Kexin/furin"/>
</dbReference>
<dbReference type="InterPro" id="IPR002884">
    <property type="entry name" value="P_dom"/>
</dbReference>
<dbReference type="InterPro" id="IPR000209">
    <property type="entry name" value="Peptidase_S8/S53_dom"/>
</dbReference>
<dbReference type="InterPro" id="IPR036852">
    <property type="entry name" value="Peptidase_S8/S53_dom_sf"/>
</dbReference>
<dbReference type="InterPro" id="IPR023827">
    <property type="entry name" value="Peptidase_S8_Asp-AS"/>
</dbReference>
<dbReference type="InterPro" id="IPR022398">
    <property type="entry name" value="Peptidase_S8_His-AS"/>
</dbReference>
<dbReference type="InterPro" id="IPR023828">
    <property type="entry name" value="Peptidase_S8_Ser-AS"/>
</dbReference>
<dbReference type="InterPro" id="IPR015500">
    <property type="entry name" value="Peptidase_S8_subtilisin-rel"/>
</dbReference>
<dbReference type="InterPro" id="IPR032815">
    <property type="entry name" value="S8_pro-domain"/>
</dbReference>
<dbReference type="InterPro" id="IPR038466">
    <property type="entry name" value="S8_pro-domain_sf"/>
</dbReference>
<dbReference type="PANTHER" id="PTHR42884:SF23">
    <property type="entry name" value="FURIN-LIKE PROTEASE 2"/>
    <property type="match status" value="1"/>
</dbReference>
<dbReference type="PANTHER" id="PTHR42884">
    <property type="entry name" value="PROPROTEIN CONVERTASE SUBTILISIN/KEXIN-RELATED"/>
    <property type="match status" value="1"/>
</dbReference>
<dbReference type="Pfam" id="PF01483">
    <property type="entry name" value="P_proprotein"/>
    <property type="match status" value="1"/>
</dbReference>
<dbReference type="Pfam" id="PF00082">
    <property type="entry name" value="Peptidase_S8"/>
    <property type="match status" value="1"/>
</dbReference>
<dbReference type="Pfam" id="PF16470">
    <property type="entry name" value="S8_pro-domain"/>
    <property type="match status" value="1"/>
</dbReference>
<dbReference type="PRINTS" id="PR00723">
    <property type="entry name" value="SUBTILISIN"/>
</dbReference>
<dbReference type="SUPFAM" id="SSF49785">
    <property type="entry name" value="Galactose-binding domain-like"/>
    <property type="match status" value="1"/>
</dbReference>
<dbReference type="SUPFAM" id="SSF54897">
    <property type="entry name" value="Protease propeptides/inhibitors"/>
    <property type="match status" value="1"/>
</dbReference>
<dbReference type="SUPFAM" id="SSF52743">
    <property type="entry name" value="Subtilisin-like"/>
    <property type="match status" value="1"/>
</dbReference>
<dbReference type="PROSITE" id="PS51829">
    <property type="entry name" value="P_HOMO_B"/>
    <property type="match status" value="1"/>
</dbReference>
<dbReference type="PROSITE" id="PS51892">
    <property type="entry name" value="SUBTILASE"/>
    <property type="match status" value="1"/>
</dbReference>
<dbReference type="PROSITE" id="PS00136">
    <property type="entry name" value="SUBTILASE_ASP"/>
    <property type="match status" value="1"/>
</dbReference>
<dbReference type="PROSITE" id="PS00137">
    <property type="entry name" value="SUBTILASE_HIS"/>
    <property type="match status" value="1"/>
</dbReference>
<dbReference type="PROSITE" id="PS00138">
    <property type="entry name" value="SUBTILASE_SER"/>
    <property type="match status" value="1"/>
</dbReference>
<feature type="signal peptide" evidence="2">
    <location>
        <begin position="1"/>
        <end position="29"/>
    </location>
</feature>
<feature type="propeptide" id="PRO_0000027073" evidence="2">
    <location>
        <begin position="30"/>
        <end position="152"/>
    </location>
</feature>
<feature type="chain" id="PRO_0000027074" description="PC3-like endoprotease variant A">
    <location>
        <begin position="153"/>
        <end position="793"/>
    </location>
</feature>
<feature type="domain" description="Peptidase S8" evidence="4">
    <location>
        <begin position="164"/>
        <end position="486"/>
    </location>
</feature>
<feature type="domain" description="P/Homo B" evidence="3">
    <location>
        <begin position="495"/>
        <end position="638"/>
    </location>
</feature>
<feature type="active site" description="Charge relay system" evidence="4">
    <location>
        <position position="202"/>
    </location>
</feature>
<feature type="active site" description="Charge relay system" evidence="4">
    <location>
        <position position="242"/>
    </location>
</feature>
<feature type="active site" description="Charge relay system" evidence="4">
    <location>
        <position position="419"/>
    </location>
</feature>
<feature type="glycosylation site" description="N-linked (GlcNAc...) asparagine" evidence="2">
    <location>
        <position position="62"/>
    </location>
</feature>
<feature type="glycosylation site" description="N-linked (GlcNAc...) asparagine" evidence="2">
    <location>
        <position position="190"/>
    </location>
</feature>
<feature type="disulfide bond" evidence="1">
    <location>
        <begin position="259"/>
        <end position="411"/>
    </location>
</feature>
<feature type="disulfide bond" evidence="1">
    <location>
        <begin position="351"/>
        <end position="381"/>
    </location>
</feature>
<feature type="disulfide bond" evidence="1">
    <location>
        <begin position="501"/>
        <end position="527"/>
    </location>
</feature>
<reference key="1">
    <citation type="journal article" date="1992" name="Proc. Natl. Acad. Sci. U.S.A.">
        <title>Conservation of the prohormone convertase gene family in metazoa: analysis of cDNAs encoding a PC3-like protein from hydra.</title>
        <authorList>
            <person name="Chan S.J."/>
            <person name="Oliva A.A. Jr."/>
            <person name="Lamendola J."/>
            <person name="Grens A."/>
            <person name="Bode H."/>
            <person name="Steiner D.F."/>
        </authorList>
    </citation>
    <scope>NUCLEOTIDE SEQUENCE [MRNA]</scope>
</reference>
<organism>
    <name type="scientific">Hydra vulgaris</name>
    <name type="common">Hydra</name>
    <name type="synonym">Hydra attenuata</name>
    <dbReference type="NCBI Taxonomy" id="6087"/>
    <lineage>
        <taxon>Eukaryota</taxon>
        <taxon>Metazoa</taxon>
        <taxon>Cnidaria</taxon>
        <taxon>Hydrozoa</taxon>
        <taxon>Hydroidolina</taxon>
        <taxon>Anthoathecata</taxon>
        <taxon>Aplanulata</taxon>
        <taxon>Hydridae</taxon>
        <taxon>Hydra</taxon>
    </lineage>
</organism>
<evidence type="ECO:0000250" key="1"/>
<evidence type="ECO:0000255" key="2"/>
<evidence type="ECO:0000255" key="3">
    <source>
        <dbReference type="PROSITE-ProRule" id="PRU01173"/>
    </source>
</evidence>
<evidence type="ECO:0000255" key="4">
    <source>
        <dbReference type="PROSITE-ProRule" id="PRU01240"/>
    </source>
</evidence>
<evidence type="ECO:0000305" key="5"/>